<dbReference type="EC" id="3.1.1.4"/>
<dbReference type="PIR" id="D34860">
    <property type="entry name" value="D34860"/>
</dbReference>
<dbReference type="SMR" id="P20253"/>
<dbReference type="GO" id="GO:0005576">
    <property type="term" value="C:extracellular region"/>
    <property type="evidence" value="ECO:0007669"/>
    <property type="project" value="UniProtKB-SubCell"/>
</dbReference>
<dbReference type="GO" id="GO:0005509">
    <property type="term" value="F:calcium ion binding"/>
    <property type="evidence" value="ECO:0007669"/>
    <property type="project" value="InterPro"/>
</dbReference>
<dbReference type="GO" id="GO:0047498">
    <property type="term" value="F:calcium-dependent phospholipase A2 activity"/>
    <property type="evidence" value="ECO:0007669"/>
    <property type="project" value="TreeGrafter"/>
</dbReference>
<dbReference type="GO" id="GO:0005543">
    <property type="term" value="F:phospholipid binding"/>
    <property type="evidence" value="ECO:0007669"/>
    <property type="project" value="TreeGrafter"/>
</dbReference>
<dbReference type="GO" id="GO:0050482">
    <property type="term" value="P:arachidonate secretion"/>
    <property type="evidence" value="ECO:0007669"/>
    <property type="project" value="InterPro"/>
</dbReference>
<dbReference type="GO" id="GO:0016042">
    <property type="term" value="P:lipid catabolic process"/>
    <property type="evidence" value="ECO:0007669"/>
    <property type="project" value="UniProtKB-KW"/>
</dbReference>
<dbReference type="GO" id="GO:0006644">
    <property type="term" value="P:phospholipid metabolic process"/>
    <property type="evidence" value="ECO:0007669"/>
    <property type="project" value="InterPro"/>
</dbReference>
<dbReference type="CDD" id="cd00125">
    <property type="entry name" value="PLA2c"/>
    <property type="match status" value="1"/>
</dbReference>
<dbReference type="FunFam" id="1.20.90.10:FF:000007">
    <property type="entry name" value="Acidic phospholipase A2"/>
    <property type="match status" value="1"/>
</dbReference>
<dbReference type="Gene3D" id="1.20.90.10">
    <property type="entry name" value="Phospholipase A2 domain"/>
    <property type="match status" value="1"/>
</dbReference>
<dbReference type="InterPro" id="IPR001211">
    <property type="entry name" value="PLipase_A2"/>
</dbReference>
<dbReference type="InterPro" id="IPR033112">
    <property type="entry name" value="PLipase_A2_Asp_AS"/>
</dbReference>
<dbReference type="InterPro" id="IPR016090">
    <property type="entry name" value="PLipase_A2_dom"/>
</dbReference>
<dbReference type="InterPro" id="IPR036444">
    <property type="entry name" value="PLipase_A2_dom_sf"/>
</dbReference>
<dbReference type="InterPro" id="IPR033113">
    <property type="entry name" value="PLipase_A2_His_AS"/>
</dbReference>
<dbReference type="PANTHER" id="PTHR11716:SF51">
    <property type="entry name" value="PHOSPHOLIPASE A2"/>
    <property type="match status" value="1"/>
</dbReference>
<dbReference type="PANTHER" id="PTHR11716">
    <property type="entry name" value="PHOSPHOLIPASE A2 FAMILY MEMBER"/>
    <property type="match status" value="1"/>
</dbReference>
<dbReference type="Pfam" id="PF00068">
    <property type="entry name" value="Phospholip_A2_1"/>
    <property type="match status" value="1"/>
</dbReference>
<dbReference type="PRINTS" id="PR00389">
    <property type="entry name" value="PHPHLIPASEA2"/>
</dbReference>
<dbReference type="SMART" id="SM00085">
    <property type="entry name" value="PA2c"/>
    <property type="match status" value="1"/>
</dbReference>
<dbReference type="SUPFAM" id="SSF48619">
    <property type="entry name" value="Phospholipase A2, PLA2"/>
    <property type="match status" value="1"/>
</dbReference>
<dbReference type="PROSITE" id="PS00119">
    <property type="entry name" value="PA2_ASP"/>
    <property type="match status" value="1"/>
</dbReference>
<dbReference type="PROSITE" id="PS00118">
    <property type="entry name" value="PA2_HIS"/>
    <property type="match status" value="1"/>
</dbReference>
<sequence>NLIQFKSIIECANRGSRRWLDYADYGCYCGWGGSGTPVDELDRCCKVHDECYGEAVKQGCFPKLTVYSWKCTENVPICDSRSKCKDFVCACDAAAAKCFAKAPYNKDNYNIDTKTRCQ</sequence>
<name>PA2B9_PSEAU</name>
<protein>
    <recommendedName>
        <fullName>Basic phospholipase A2 PA-9C</fullName>
        <shortName>svPLA2</shortName>
        <ecNumber>3.1.1.4</ecNumber>
    </recommendedName>
    <alternativeName>
        <fullName>Phosphatidylcholine 2-acylhydrolase</fullName>
    </alternativeName>
</protein>
<keyword id="KW-0106">Calcium</keyword>
<keyword id="KW-0903">Direct protein sequencing</keyword>
<keyword id="KW-1015">Disulfide bond</keyword>
<keyword id="KW-0378">Hydrolase</keyword>
<keyword id="KW-0442">Lipid degradation</keyword>
<keyword id="KW-0443">Lipid metabolism</keyword>
<keyword id="KW-0479">Metal-binding</keyword>
<keyword id="KW-0964">Secreted</keyword>
<proteinExistence type="evidence at protein level"/>
<reference key="1">
    <citation type="journal article" date="1990" name="Toxicon">
        <title>Amino acid sequences of eight phospholipases A2 from the venom of Australian king brown snake, Pseudechis australis.</title>
        <authorList>
            <person name="Takasaki C."/>
            <person name="Yutani F."/>
            <person name="Kajiyashiki T."/>
        </authorList>
    </citation>
    <scope>PROTEIN SEQUENCE</scope>
    <scope>TOXIC DOSE</scope>
    <source>
        <tissue>Venom</tissue>
    </source>
</reference>
<comment type="function">
    <text>PLA2 catalyzes the calcium-dependent hydrolysis of the 2-acyl groups in 3-sn-phosphoglycerides.</text>
</comment>
<comment type="catalytic activity">
    <reaction evidence="2 3">
        <text>a 1,2-diacyl-sn-glycero-3-phosphocholine + H2O = a 1-acyl-sn-glycero-3-phosphocholine + a fatty acid + H(+)</text>
        <dbReference type="Rhea" id="RHEA:15801"/>
        <dbReference type="ChEBI" id="CHEBI:15377"/>
        <dbReference type="ChEBI" id="CHEBI:15378"/>
        <dbReference type="ChEBI" id="CHEBI:28868"/>
        <dbReference type="ChEBI" id="CHEBI:57643"/>
        <dbReference type="ChEBI" id="CHEBI:58168"/>
        <dbReference type="EC" id="3.1.1.4"/>
    </reaction>
</comment>
<comment type="cofactor">
    <cofactor evidence="1">
        <name>Ca(2+)</name>
        <dbReference type="ChEBI" id="CHEBI:29108"/>
    </cofactor>
    <text evidence="1">Binds 1 Ca(2+) ion.</text>
</comment>
<comment type="subcellular location">
    <subcellularLocation>
        <location>Secreted</location>
    </subcellularLocation>
</comment>
<comment type="tissue specificity">
    <text>Expressed by the venom gland.</text>
</comment>
<comment type="toxic dose">
    <text evidence="4">LD(50) is 4.7 mg/kg by intravenous injection.</text>
</comment>
<comment type="similarity">
    <text evidence="5">Belongs to the phospholipase A2 family. Group I subfamily. D49 sub-subfamily.</text>
</comment>
<accession>P20253</accession>
<feature type="chain" id="PRO_0000161684" description="Basic phospholipase A2 PA-9C">
    <location>
        <begin position="1"/>
        <end position="118"/>
    </location>
</feature>
<feature type="active site" evidence="1">
    <location>
        <position position="48"/>
    </location>
</feature>
<feature type="active site" evidence="1">
    <location>
        <position position="92"/>
    </location>
</feature>
<feature type="binding site" evidence="1">
    <location>
        <position position="28"/>
    </location>
    <ligand>
        <name>Ca(2+)</name>
        <dbReference type="ChEBI" id="CHEBI:29108"/>
    </ligand>
</feature>
<feature type="binding site" evidence="1">
    <location>
        <position position="30"/>
    </location>
    <ligand>
        <name>Ca(2+)</name>
        <dbReference type="ChEBI" id="CHEBI:29108"/>
    </ligand>
</feature>
<feature type="binding site" evidence="1">
    <location>
        <position position="32"/>
    </location>
    <ligand>
        <name>Ca(2+)</name>
        <dbReference type="ChEBI" id="CHEBI:29108"/>
    </ligand>
</feature>
<feature type="binding site" evidence="1">
    <location>
        <position position="49"/>
    </location>
    <ligand>
        <name>Ca(2+)</name>
        <dbReference type="ChEBI" id="CHEBI:29108"/>
    </ligand>
</feature>
<feature type="disulfide bond" evidence="1">
    <location>
        <begin position="11"/>
        <end position="71"/>
    </location>
</feature>
<feature type="disulfide bond" evidence="1">
    <location>
        <begin position="27"/>
        <end position="117"/>
    </location>
</feature>
<feature type="disulfide bond" evidence="1">
    <location>
        <begin position="29"/>
        <end position="45"/>
    </location>
</feature>
<feature type="disulfide bond" evidence="1">
    <location>
        <begin position="44"/>
        <end position="98"/>
    </location>
</feature>
<feature type="disulfide bond" evidence="1">
    <location>
        <begin position="51"/>
        <end position="91"/>
    </location>
</feature>
<feature type="disulfide bond" evidence="1">
    <location>
        <begin position="60"/>
        <end position="84"/>
    </location>
</feature>
<feature type="disulfide bond" evidence="1">
    <location>
        <begin position="78"/>
        <end position="89"/>
    </location>
</feature>
<organism>
    <name type="scientific">Pseudechis australis</name>
    <name type="common">Mulga snake</name>
    <name type="synonym">King brown snake</name>
    <dbReference type="NCBI Taxonomy" id="8670"/>
    <lineage>
        <taxon>Eukaryota</taxon>
        <taxon>Metazoa</taxon>
        <taxon>Chordata</taxon>
        <taxon>Craniata</taxon>
        <taxon>Vertebrata</taxon>
        <taxon>Euteleostomi</taxon>
        <taxon>Lepidosauria</taxon>
        <taxon>Squamata</taxon>
        <taxon>Bifurcata</taxon>
        <taxon>Unidentata</taxon>
        <taxon>Episquamata</taxon>
        <taxon>Toxicofera</taxon>
        <taxon>Serpentes</taxon>
        <taxon>Colubroidea</taxon>
        <taxon>Elapidae</taxon>
        <taxon>Hydrophiinae</taxon>
        <taxon>Pseudechis</taxon>
    </lineage>
</organism>
<evidence type="ECO:0000250" key="1"/>
<evidence type="ECO:0000255" key="2">
    <source>
        <dbReference type="PROSITE-ProRule" id="PRU10035"/>
    </source>
</evidence>
<evidence type="ECO:0000255" key="3">
    <source>
        <dbReference type="PROSITE-ProRule" id="PRU10036"/>
    </source>
</evidence>
<evidence type="ECO:0000269" key="4">
    <source>
    </source>
</evidence>
<evidence type="ECO:0000305" key="5"/>